<keyword id="KW-0963">Cytoplasm</keyword>
<keyword id="KW-0251">Elongation factor</keyword>
<keyword id="KW-0648">Protein biosynthesis</keyword>
<keyword id="KW-1185">Reference proteome</keyword>
<name>EFTS_PSYA2</name>
<protein>
    <recommendedName>
        <fullName evidence="1">Elongation factor Ts</fullName>
        <shortName evidence="1">EF-Ts</shortName>
    </recommendedName>
</protein>
<gene>
    <name evidence="1" type="primary">tsf</name>
    <name type="ordered locus">Psyc_0351</name>
</gene>
<feature type="chain" id="PRO_0000241512" description="Elongation factor Ts">
    <location>
        <begin position="1"/>
        <end position="294"/>
    </location>
</feature>
<feature type="region of interest" description="Involved in Mg(2+) ion dislocation from EF-Tu" evidence="1">
    <location>
        <begin position="82"/>
        <end position="85"/>
    </location>
</feature>
<accession>Q4FUT8</accession>
<evidence type="ECO:0000255" key="1">
    <source>
        <dbReference type="HAMAP-Rule" id="MF_00050"/>
    </source>
</evidence>
<comment type="function">
    <text evidence="1">Associates with the EF-Tu.GDP complex and induces the exchange of GDP to GTP. It remains bound to the aminoacyl-tRNA.EF-Tu.GTP complex up to the GTP hydrolysis stage on the ribosome.</text>
</comment>
<comment type="subcellular location">
    <subcellularLocation>
        <location evidence="1">Cytoplasm</location>
    </subcellularLocation>
</comment>
<comment type="similarity">
    <text evidence="1">Belongs to the EF-Ts family.</text>
</comment>
<reference key="1">
    <citation type="journal article" date="2010" name="Appl. Environ. Microbiol.">
        <title>The genome sequence of Psychrobacter arcticus 273-4, a psychroactive Siberian permafrost bacterium, reveals mechanisms for adaptation to low-temperature growth.</title>
        <authorList>
            <person name="Ayala-del-Rio H.L."/>
            <person name="Chain P.S."/>
            <person name="Grzymski J.J."/>
            <person name="Ponder M.A."/>
            <person name="Ivanova N."/>
            <person name="Bergholz P.W."/>
            <person name="Di Bartolo G."/>
            <person name="Hauser L."/>
            <person name="Land M."/>
            <person name="Bakermans C."/>
            <person name="Rodrigues D."/>
            <person name="Klappenbach J."/>
            <person name="Zarka D."/>
            <person name="Larimer F."/>
            <person name="Richardson P."/>
            <person name="Murray A."/>
            <person name="Thomashow M."/>
            <person name="Tiedje J.M."/>
        </authorList>
    </citation>
    <scope>NUCLEOTIDE SEQUENCE [LARGE SCALE GENOMIC DNA]</scope>
    <source>
        <strain>DSM 17307 / VKM B-2377 / 273-4</strain>
    </source>
</reference>
<organism>
    <name type="scientific">Psychrobacter arcticus (strain DSM 17307 / VKM B-2377 / 273-4)</name>
    <dbReference type="NCBI Taxonomy" id="259536"/>
    <lineage>
        <taxon>Bacteria</taxon>
        <taxon>Pseudomonadati</taxon>
        <taxon>Pseudomonadota</taxon>
        <taxon>Gammaproteobacteria</taxon>
        <taxon>Moraxellales</taxon>
        <taxon>Moraxellaceae</taxon>
        <taxon>Psychrobacter</taxon>
    </lineage>
</organism>
<proteinExistence type="inferred from homology"/>
<dbReference type="EMBL" id="CP000082">
    <property type="protein sequence ID" value="AAZ18220.1"/>
    <property type="molecule type" value="Genomic_DNA"/>
</dbReference>
<dbReference type="RefSeq" id="WP_011279658.1">
    <property type="nucleotide sequence ID" value="NC_007204.1"/>
</dbReference>
<dbReference type="SMR" id="Q4FUT8"/>
<dbReference type="STRING" id="259536.Psyc_0351"/>
<dbReference type="KEGG" id="par:Psyc_0351"/>
<dbReference type="eggNOG" id="COG0264">
    <property type="taxonomic scope" value="Bacteria"/>
</dbReference>
<dbReference type="HOGENOM" id="CLU_047155_0_2_6"/>
<dbReference type="OrthoDB" id="9808348at2"/>
<dbReference type="Proteomes" id="UP000000546">
    <property type="component" value="Chromosome"/>
</dbReference>
<dbReference type="GO" id="GO:0005737">
    <property type="term" value="C:cytoplasm"/>
    <property type="evidence" value="ECO:0007669"/>
    <property type="project" value="UniProtKB-SubCell"/>
</dbReference>
<dbReference type="GO" id="GO:0003746">
    <property type="term" value="F:translation elongation factor activity"/>
    <property type="evidence" value="ECO:0007669"/>
    <property type="project" value="UniProtKB-UniRule"/>
</dbReference>
<dbReference type="CDD" id="cd14275">
    <property type="entry name" value="UBA_EF-Ts"/>
    <property type="match status" value="1"/>
</dbReference>
<dbReference type="FunFam" id="1.10.286.20:FF:000001">
    <property type="entry name" value="Elongation factor Ts"/>
    <property type="match status" value="1"/>
</dbReference>
<dbReference type="FunFam" id="1.10.8.10:FF:000001">
    <property type="entry name" value="Elongation factor Ts"/>
    <property type="match status" value="1"/>
</dbReference>
<dbReference type="FunFam" id="3.30.479.20:FF:000001">
    <property type="entry name" value="Elongation factor Ts"/>
    <property type="match status" value="1"/>
</dbReference>
<dbReference type="Gene3D" id="1.10.286.20">
    <property type="match status" value="1"/>
</dbReference>
<dbReference type="Gene3D" id="1.10.8.10">
    <property type="entry name" value="DNA helicase RuvA subunit, C-terminal domain"/>
    <property type="match status" value="1"/>
</dbReference>
<dbReference type="Gene3D" id="3.30.479.20">
    <property type="entry name" value="Elongation factor Ts, dimerisation domain"/>
    <property type="match status" value="2"/>
</dbReference>
<dbReference type="HAMAP" id="MF_00050">
    <property type="entry name" value="EF_Ts"/>
    <property type="match status" value="1"/>
</dbReference>
<dbReference type="InterPro" id="IPR036402">
    <property type="entry name" value="EF-Ts_dimer_sf"/>
</dbReference>
<dbReference type="InterPro" id="IPR001816">
    <property type="entry name" value="Transl_elong_EFTs/EF1B"/>
</dbReference>
<dbReference type="InterPro" id="IPR014039">
    <property type="entry name" value="Transl_elong_EFTs/EF1B_dimer"/>
</dbReference>
<dbReference type="InterPro" id="IPR018101">
    <property type="entry name" value="Transl_elong_Ts_CS"/>
</dbReference>
<dbReference type="InterPro" id="IPR009060">
    <property type="entry name" value="UBA-like_sf"/>
</dbReference>
<dbReference type="NCBIfam" id="TIGR00116">
    <property type="entry name" value="tsf"/>
    <property type="match status" value="1"/>
</dbReference>
<dbReference type="PANTHER" id="PTHR11741">
    <property type="entry name" value="ELONGATION FACTOR TS"/>
    <property type="match status" value="1"/>
</dbReference>
<dbReference type="PANTHER" id="PTHR11741:SF0">
    <property type="entry name" value="ELONGATION FACTOR TS, MITOCHONDRIAL"/>
    <property type="match status" value="1"/>
</dbReference>
<dbReference type="Pfam" id="PF00889">
    <property type="entry name" value="EF_TS"/>
    <property type="match status" value="1"/>
</dbReference>
<dbReference type="SUPFAM" id="SSF54713">
    <property type="entry name" value="Elongation factor Ts (EF-Ts), dimerisation domain"/>
    <property type="match status" value="2"/>
</dbReference>
<dbReference type="SUPFAM" id="SSF46934">
    <property type="entry name" value="UBA-like"/>
    <property type="match status" value="1"/>
</dbReference>
<dbReference type="PROSITE" id="PS01126">
    <property type="entry name" value="EF_TS_1"/>
    <property type="match status" value="1"/>
</dbReference>
<dbReference type="PROSITE" id="PS01127">
    <property type="entry name" value="EF_TS_2"/>
    <property type="match status" value="1"/>
</dbReference>
<sequence length="294" mass="31766">MSEVKVSAKMVKELRDRTGLGMMECKKALEESNGDVETAIDNLRKSGQAKAAKKAGNIAADGAIIIAQGESKAFLLEVNCQTDFVAKDENFTAFAETVANIALENNVTDVAAIAELPYGNDQTVEEARVSLVQKIGENIQIRRVEVLEGANIAAYRHGLRIGVVVSYEGGSAETGKNLAMHIAAFNPVAIDDEDVAADLLAREKDIIEAKARESGKPDNIVEKMIEGGLRKYLEEVTLLRQSYVMDNEKKVGDVLKAEGVKVLGFKRLEVGEGIEKKQEDFAAEVAATQALANK</sequence>